<protein>
    <recommendedName>
        <fullName>Histone deacetylase 3</fullName>
        <shortName>HD3</shortName>
        <ecNumber>3.5.1.98</ecNumber>
    </recommendedName>
</protein>
<gene>
    <name type="primary">hdac3</name>
    <name type="ORF">GSTENG00019185001</name>
</gene>
<sequence length="428" mass="49144">MTNRTSYFYDPDVGNFHYGAGHPMKPHRLSLTHSLVLHYGLYKKMMVFKPYKASQHDMCRFHSEDYIDFLQKVSPNNMQGFTKSLNTFNVGDDCPVFPGLFEFCSRYTGASLQGATQLNHKICDIAINWAGGLHHAKKFEASGFCYVNDIVISILELLKYHPRVLYIDIDIHHGDGVQEAFYLTDRVMTVSFHKYGNYFFPGTGDMYEVGAESGRYYCLNVPLRDGIDDQSYRQLFQPVIKQVVDFYQPTCIVLQCGADSLGCDRLGCFNLSIRGHGECVEFVKSFKIPLLVLGGGGYTVRNVARCWTFETSLLLEESISDELPYSEYFEYFAPDFTLHPDVSTRIENQNSRQYLEQIRQTVFENLKMLNHAPSVQIHDVPSDMLNYERNDEPDPDERGAEENYTRPEAANEFYDGDHDNDKESDVEI</sequence>
<evidence type="ECO:0000250" key="1"/>
<evidence type="ECO:0000250" key="2">
    <source>
        <dbReference type="UniProtKB" id="O15379"/>
    </source>
</evidence>
<evidence type="ECO:0000250" key="3">
    <source>
        <dbReference type="UniProtKB" id="O88895"/>
    </source>
</evidence>
<evidence type="ECO:0000256" key="4">
    <source>
        <dbReference type="SAM" id="MobiDB-lite"/>
    </source>
</evidence>
<evidence type="ECO:0000305" key="5"/>
<comment type="function">
    <text evidence="2 3">Responsible for the deacetylation of lysine residues on the N-terminal part of the core histones (H2A, H2B, H3 and H4) (By similarity). Histone deacetylation gives a tag for epigenetic repression and plays an important role in transcriptional regulation, cell cycle progression and developmental events (By similarity). Histone deacetylases act via the formation of large multiprotein complexes, such as N-Cor repressor complex, which activate the histone deacetylase activity (By similarity). May play a role in the regulation of the circadian clock in a deacetylase activity-independent manner (By similarity).</text>
</comment>
<comment type="catalytic activity">
    <reaction>
        <text>N(6)-acetyl-L-lysyl-[histone] + H2O = L-lysyl-[histone] + acetate</text>
        <dbReference type="Rhea" id="RHEA:58196"/>
        <dbReference type="Rhea" id="RHEA-COMP:9845"/>
        <dbReference type="Rhea" id="RHEA-COMP:11338"/>
        <dbReference type="ChEBI" id="CHEBI:15377"/>
        <dbReference type="ChEBI" id="CHEBI:29969"/>
        <dbReference type="ChEBI" id="CHEBI:30089"/>
        <dbReference type="ChEBI" id="CHEBI:61930"/>
        <dbReference type="EC" id="3.5.1.98"/>
    </reaction>
</comment>
<comment type="activity regulation">
    <text evidence="2">Inositol tetraphosphate (1D-myo-inositol 1,4,5,6-tetrakisphosphate) promotes the histone deacetylase activity by acting as an intermolecular glue between hdac3 and N-Cor repressor complex components.</text>
</comment>
<comment type="subcellular location">
    <subcellularLocation>
        <location evidence="2">Nucleus</location>
    </subcellularLocation>
    <subcellularLocation>
        <location evidence="2">Chromosome</location>
    </subcellularLocation>
    <subcellularLocation>
        <location evidence="2">Cytoplasm</location>
        <location evidence="2">Cytosol</location>
    </subcellularLocation>
</comment>
<comment type="similarity">
    <text evidence="5">Belongs to the histone deacetylase family. HD type 1 subfamily.</text>
</comment>
<keyword id="KW-0090">Biological rhythms</keyword>
<keyword id="KW-0156">Chromatin regulator</keyword>
<keyword id="KW-0158">Chromosome</keyword>
<keyword id="KW-0963">Cytoplasm</keyword>
<keyword id="KW-0378">Hydrolase</keyword>
<keyword id="KW-0479">Metal-binding</keyword>
<keyword id="KW-0539">Nucleus</keyword>
<keyword id="KW-1185">Reference proteome</keyword>
<keyword id="KW-0678">Repressor</keyword>
<keyword id="KW-0804">Transcription</keyword>
<keyword id="KW-0805">Transcription regulation</keyword>
<keyword id="KW-0862">Zinc</keyword>
<feature type="chain" id="PRO_0000352679" description="Histone deacetylase 3">
    <location>
        <begin position="1"/>
        <end position="428"/>
    </location>
</feature>
<feature type="region of interest" description="Histone deacetylase">
    <location>
        <begin position="3"/>
        <end position="316"/>
    </location>
</feature>
<feature type="region of interest" description="Disordered" evidence="4">
    <location>
        <begin position="385"/>
        <end position="428"/>
    </location>
</feature>
<feature type="compositionally biased region" description="Basic and acidic residues" evidence="4">
    <location>
        <begin position="386"/>
        <end position="405"/>
    </location>
</feature>
<feature type="compositionally biased region" description="Basic and acidic residues" evidence="4">
    <location>
        <begin position="415"/>
        <end position="428"/>
    </location>
</feature>
<feature type="active site" evidence="1">
    <location>
        <position position="135"/>
    </location>
</feature>
<feature type="binding site" evidence="2">
    <location>
        <position position="17"/>
    </location>
    <ligand>
        <name>1D-myo-inositol 1,4,5,6-tetrakisphosphate</name>
        <dbReference type="ChEBI" id="CHEBI:57627"/>
    </ligand>
</feature>
<feature type="binding site" evidence="2">
    <location>
        <position position="21"/>
    </location>
    <ligand>
        <name>1D-myo-inositol 1,4,5,6-tetrakisphosphate</name>
        <dbReference type="ChEBI" id="CHEBI:57627"/>
    </ligand>
</feature>
<feature type="binding site" evidence="2">
    <location>
        <position position="25"/>
    </location>
    <ligand>
        <name>1D-myo-inositol 1,4,5,6-tetrakisphosphate</name>
        <dbReference type="ChEBI" id="CHEBI:57627"/>
    </ligand>
</feature>
<feature type="binding site" evidence="2">
    <location>
        <position position="170"/>
    </location>
    <ligand>
        <name>Zn(2+)</name>
        <dbReference type="ChEBI" id="CHEBI:29105"/>
    </ligand>
</feature>
<feature type="binding site" evidence="2">
    <location>
        <position position="172"/>
    </location>
    <ligand>
        <name>Zn(2+)</name>
        <dbReference type="ChEBI" id="CHEBI:29105"/>
    </ligand>
</feature>
<feature type="binding site" evidence="2">
    <location>
        <position position="259"/>
    </location>
    <ligand>
        <name>Zn(2+)</name>
        <dbReference type="ChEBI" id="CHEBI:29105"/>
    </ligand>
</feature>
<feature type="binding site" evidence="2">
    <location>
        <position position="265"/>
    </location>
    <ligand>
        <name>1D-myo-inositol 1,4,5,6-tetrakisphosphate</name>
        <dbReference type="ChEBI" id="CHEBI:57627"/>
    </ligand>
</feature>
<proteinExistence type="inferred from homology"/>
<reference key="1">
    <citation type="journal article" date="2004" name="Nature">
        <title>Genome duplication in the teleost fish Tetraodon nigroviridis reveals the early vertebrate proto-karyotype.</title>
        <authorList>
            <person name="Jaillon O."/>
            <person name="Aury J.-M."/>
            <person name="Brunet F."/>
            <person name="Petit J.-L."/>
            <person name="Stange-Thomann N."/>
            <person name="Mauceli E."/>
            <person name="Bouneau L."/>
            <person name="Fischer C."/>
            <person name="Ozouf-Costaz C."/>
            <person name="Bernot A."/>
            <person name="Nicaud S."/>
            <person name="Jaffe D."/>
            <person name="Fisher S."/>
            <person name="Lutfalla G."/>
            <person name="Dossat C."/>
            <person name="Segurens B."/>
            <person name="Dasilva C."/>
            <person name="Salanoubat M."/>
            <person name="Levy M."/>
            <person name="Boudet N."/>
            <person name="Castellano S."/>
            <person name="Anthouard V."/>
            <person name="Jubin C."/>
            <person name="Castelli V."/>
            <person name="Katinka M."/>
            <person name="Vacherie B."/>
            <person name="Biemont C."/>
            <person name="Skalli Z."/>
            <person name="Cattolico L."/>
            <person name="Poulain J."/>
            <person name="De Berardinis V."/>
            <person name="Cruaud C."/>
            <person name="Duprat S."/>
            <person name="Brottier P."/>
            <person name="Coutanceau J.-P."/>
            <person name="Gouzy J."/>
            <person name="Parra G."/>
            <person name="Lardier G."/>
            <person name="Chapple C."/>
            <person name="McKernan K.J."/>
            <person name="McEwan P."/>
            <person name="Bosak S."/>
            <person name="Kellis M."/>
            <person name="Volff J.-N."/>
            <person name="Guigo R."/>
            <person name="Zody M.C."/>
            <person name="Mesirov J."/>
            <person name="Lindblad-Toh K."/>
            <person name="Birren B."/>
            <person name="Nusbaum C."/>
            <person name="Kahn D."/>
            <person name="Robinson-Rechavi M."/>
            <person name="Laudet V."/>
            <person name="Schachter V."/>
            <person name="Quetier F."/>
            <person name="Saurin W."/>
            <person name="Scarpelli C."/>
            <person name="Wincker P."/>
            <person name="Lander E.S."/>
            <person name="Weissenbach J."/>
            <person name="Roest Crollius H."/>
        </authorList>
    </citation>
    <scope>NUCLEOTIDE SEQUENCE [LARGE SCALE GENOMIC DNA]</scope>
</reference>
<accession>Q4SFA0</accession>
<dbReference type="EC" id="3.5.1.98"/>
<dbReference type="EMBL" id="CAAE01014606">
    <property type="protein sequence ID" value="CAG00682.1"/>
    <property type="molecule type" value="Genomic_DNA"/>
</dbReference>
<dbReference type="SMR" id="Q4SFA0"/>
<dbReference type="FunCoup" id="Q4SFA0">
    <property type="interactions" value="453"/>
</dbReference>
<dbReference type="STRING" id="99883.ENSTNIP00000013021"/>
<dbReference type="KEGG" id="tng:GSTEN00019185G001"/>
<dbReference type="HOGENOM" id="CLU_007727_7_6_1"/>
<dbReference type="InParanoid" id="Q4SFA0"/>
<dbReference type="OrthoDB" id="1918432at2759"/>
<dbReference type="Proteomes" id="UP000007303">
    <property type="component" value="Unassembled WGS sequence"/>
</dbReference>
<dbReference type="GO" id="GO:0005694">
    <property type="term" value="C:chromosome"/>
    <property type="evidence" value="ECO:0007669"/>
    <property type="project" value="UniProtKB-SubCell"/>
</dbReference>
<dbReference type="GO" id="GO:0005737">
    <property type="term" value="C:cytoplasm"/>
    <property type="evidence" value="ECO:0000250"/>
    <property type="project" value="UniProtKB"/>
</dbReference>
<dbReference type="GO" id="GO:0005829">
    <property type="term" value="C:cytosol"/>
    <property type="evidence" value="ECO:0007669"/>
    <property type="project" value="UniProtKB-SubCell"/>
</dbReference>
<dbReference type="GO" id="GO:0005634">
    <property type="term" value="C:nucleus"/>
    <property type="evidence" value="ECO:0000250"/>
    <property type="project" value="UniProtKB"/>
</dbReference>
<dbReference type="GO" id="GO:0141221">
    <property type="term" value="F:histone deacetylase activity, hydrolytic mechanism"/>
    <property type="evidence" value="ECO:0007669"/>
    <property type="project" value="UniProtKB-EC"/>
</dbReference>
<dbReference type="GO" id="GO:0046872">
    <property type="term" value="F:metal ion binding"/>
    <property type="evidence" value="ECO:0007669"/>
    <property type="project" value="UniProtKB-KW"/>
</dbReference>
<dbReference type="GO" id="GO:0033558">
    <property type="term" value="F:protein lysine deacetylase activity"/>
    <property type="evidence" value="ECO:0000250"/>
    <property type="project" value="UniProtKB"/>
</dbReference>
<dbReference type="GO" id="GO:0160216">
    <property type="term" value="F:protein lysine delactylase activity"/>
    <property type="evidence" value="ECO:0000250"/>
    <property type="project" value="UniProtKB"/>
</dbReference>
<dbReference type="GO" id="GO:0003714">
    <property type="term" value="F:transcription corepressor activity"/>
    <property type="evidence" value="ECO:0000250"/>
    <property type="project" value="AgBase"/>
</dbReference>
<dbReference type="GO" id="GO:0032922">
    <property type="term" value="P:circadian regulation of gene expression"/>
    <property type="evidence" value="ECO:0000250"/>
    <property type="project" value="UniProtKB"/>
</dbReference>
<dbReference type="GO" id="GO:0040029">
    <property type="term" value="P:epigenetic regulation of gene expression"/>
    <property type="evidence" value="ECO:0007669"/>
    <property type="project" value="TreeGrafter"/>
</dbReference>
<dbReference type="GO" id="GO:0042752">
    <property type="term" value="P:regulation of circadian rhythm"/>
    <property type="evidence" value="ECO:0000250"/>
    <property type="project" value="UniProtKB"/>
</dbReference>
<dbReference type="CDD" id="cd10005">
    <property type="entry name" value="HDAC3"/>
    <property type="match status" value="1"/>
</dbReference>
<dbReference type="FunFam" id="3.40.800.20:FF:000004">
    <property type="entry name" value="Histone deacetylase"/>
    <property type="match status" value="1"/>
</dbReference>
<dbReference type="Gene3D" id="3.40.800.20">
    <property type="entry name" value="Histone deacetylase domain"/>
    <property type="match status" value="1"/>
</dbReference>
<dbReference type="InterPro" id="IPR050284">
    <property type="entry name" value="HDAC_PDAC"/>
</dbReference>
<dbReference type="InterPro" id="IPR000286">
    <property type="entry name" value="His_deacetylse"/>
</dbReference>
<dbReference type="InterPro" id="IPR003084">
    <property type="entry name" value="His_deacetylse_1"/>
</dbReference>
<dbReference type="InterPro" id="IPR023801">
    <property type="entry name" value="His_deacetylse_dom"/>
</dbReference>
<dbReference type="InterPro" id="IPR037138">
    <property type="entry name" value="His_deacetylse_dom_sf"/>
</dbReference>
<dbReference type="InterPro" id="IPR023696">
    <property type="entry name" value="Ureohydrolase_dom_sf"/>
</dbReference>
<dbReference type="PANTHER" id="PTHR10625:SF36">
    <property type="entry name" value="HISTONE DEACETYLASE 3"/>
    <property type="match status" value="1"/>
</dbReference>
<dbReference type="PANTHER" id="PTHR10625">
    <property type="entry name" value="HISTONE DEACETYLASE HDAC1-RELATED"/>
    <property type="match status" value="1"/>
</dbReference>
<dbReference type="Pfam" id="PF00850">
    <property type="entry name" value="Hist_deacetyl"/>
    <property type="match status" value="1"/>
</dbReference>
<dbReference type="PIRSF" id="PIRSF037913">
    <property type="entry name" value="His_deacetylse_1"/>
    <property type="match status" value="1"/>
</dbReference>
<dbReference type="PRINTS" id="PR01270">
    <property type="entry name" value="HDASUPER"/>
</dbReference>
<dbReference type="PRINTS" id="PR01271">
    <property type="entry name" value="HISDACETLASE"/>
</dbReference>
<dbReference type="SUPFAM" id="SSF52768">
    <property type="entry name" value="Arginase/deacetylase"/>
    <property type="match status" value="1"/>
</dbReference>
<organism>
    <name type="scientific">Tetraodon nigroviridis</name>
    <name type="common">Spotted green pufferfish</name>
    <name type="synonym">Chelonodon nigroviridis</name>
    <dbReference type="NCBI Taxonomy" id="99883"/>
    <lineage>
        <taxon>Eukaryota</taxon>
        <taxon>Metazoa</taxon>
        <taxon>Chordata</taxon>
        <taxon>Craniata</taxon>
        <taxon>Vertebrata</taxon>
        <taxon>Euteleostomi</taxon>
        <taxon>Actinopterygii</taxon>
        <taxon>Neopterygii</taxon>
        <taxon>Teleostei</taxon>
        <taxon>Neoteleostei</taxon>
        <taxon>Acanthomorphata</taxon>
        <taxon>Eupercaria</taxon>
        <taxon>Tetraodontiformes</taxon>
        <taxon>Tetradontoidea</taxon>
        <taxon>Tetraodontidae</taxon>
        <taxon>Tetraodon</taxon>
    </lineage>
</organism>
<name>HDAC3_TETNG</name>